<protein>
    <recommendedName>
        <fullName>Isoleucine--tRNA ligase</fullName>
        <ecNumber>6.1.1.5</ecNumber>
    </recommendedName>
    <alternativeName>
        <fullName>Isoleucyl-tRNA synthetase</fullName>
        <shortName>IleRS</shortName>
    </alternativeName>
</protein>
<evidence type="ECO:0000250" key="1"/>
<evidence type="ECO:0000305" key="2"/>
<accession>Q27707</accession>
<proteinExistence type="inferred from homology"/>
<feature type="chain" id="PRO_0000098601" description="Isoleucine--tRNA ligase">
    <location>
        <begin position="1" status="less than"/>
        <end position="628" status="greater than"/>
    </location>
</feature>
<feature type="short sequence motif" description="'KMSKS' region">
    <location>
        <begin position="505"/>
        <end position="509"/>
    </location>
</feature>
<feature type="binding site" evidence="1">
    <location>
        <position position="508"/>
    </location>
    <ligand>
        <name>ATP</name>
        <dbReference type="ChEBI" id="CHEBI:30616"/>
    </ligand>
</feature>
<feature type="non-terminal residue">
    <location>
        <position position="1"/>
    </location>
</feature>
<feature type="non-terminal residue">
    <location>
        <position position="628"/>
    </location>
</feature>
<sequence>WDRHGVPVEYEIDKALGITGVKDIHDMGIRKYNKECRKIVLRYTKEWEAVVKRMGRWIDFRNGYRTMDRSFMESIWHIFKMLYEKGSVYRGHRVMPYSTACSTPLSNFEANQNYKDVSDPSILVAFPLRKPFKGYSLSLVAWTTTPWTLPSHMAILVNQSFIYAIFRLKSAFFIMQRDRVNVYFKDAVVISEVKGHELLHLEHDQPFMYYNHYREKGFFRVYHADFVSEIDGTGVVHCSPGFGEDDYKAMTMPGLIKENELLPSPLDENGRFNEEVPEYKGMHVKDADQSIIKDLGKKILYEGKVYHRYPFCWRSDTPLIYKLVPNWFVRVKREIPRLLESNSTINWIPESIGEHKFKNWLSEARDWSISRNRFWGTPIPLWHCDGKYICIGSIEELSRLSGRKIDDIHRENVDDVVICKDGEKYRRIEEVFDCWFESGCMPYAQRHWPFECDNLCLPADFVAEGVDQTRGWFYTMHVISTVLLAKPRFRNCIVNGIVLASDKKKMSKRLKNYPDPMDVINRYSADSLRLYLISSPVVMAENMCFSEEGVGEVLKTLLIPWYNCIYFYSECPNAGDQEQTRMDDWILNTLNTFGNKVKRDMSKYMLQGVMGYATSFVNDLSNWYIRLN</sequence>
<keyword id="KW-0030">Aminoacyl-tRNA synthetase</keyword>
<keyword id="KW-0067">ATP-binding</keyword>
<keyword id="KW-0436">Ligase</keyword>
<keyword id="KW-0547">Nucleotide-binding</keyword>
<keyword id="KW-0648">Protein biosynthesis</keyword>
<comment type="catalytic activity">
    <reaction>
        <text>tRNA(Ile) + L-isoleucine + ATP = L-isoleucyl-tRNA(Ile) + AMP + diphosphate</text>
        <dbReference type="Rhea" id="RHEA:11060"/>
        <dbReference type="Rhea" id="RHEA-COMP:9666"/>
        <dbReference type="Rhea" id="RHEA-COMP:9695"/>
        <dbReference type="ChEBI" id="CHEBI:30616"/>
        <dbReference type="ChEBI" id="CHEBI:33019"/>
        <dbReference type="ChEBI" id="CHEBI:58045"/>
        <dbReference type="ChEBI" id="CHEBI:78442"/>
        <dbReference type="ChEBI" id="CHEBI:78528"/>
        <dbReference type="ChEBI" id="CHEBI:456215"/>
        <dbReference type="EC" id="6.1.1.5"/>
    </reaction>
</comment>
<comment type="similarity">
    <text evidence="2">Belongs to the class-I aminoacyl-tRNA synthetase family.</text>
</comment>
<name>SYI_ANTLO</name>
<dbReference type="EC" id="6.1.1.5"/>
<dbReference type="EMBL" id="L37097">
    <property type="protein sequence ID" value="AAC41564.1"/>
    <property type="molecule type" value="Genomic_DNA"/>
</dbReference>
<dbReference type="SMR" id="Q27707"/>
<dbReference type="GO" id="GO:0002161">
    <property type="term" value="F:aminoacyl-tRNA deacylase activity"/>
    <property type="evidence" value="ECO:0007669"/>
    <property type="project" value="InterPro"/>
</dbReference>
<dbReference type="GO" id="GO:0005524">
    <property type="term" value="F:ATP binding"/>
    <property type="evidence" value="ECO:0007669"/>
    <property type="project" value="UniProtKB-KW"/>
</dbReference>
<dbReference type="GO" id="GO:0004822">
    <property type="term" value="F:isoleucine-tRNA ligase activity"/>
    <property type="evidence" value="ECO:0007669"/>
    <property type="project" value="UniProtKB-EC"/>
</dbReference>
<dbReference type="GO" id="GO:0006428">
    <property type="term" value="P:isoleucyl-tRNA aminoacylation"/>
    <property type="evidence" value="ECO:0007669"/>
    <property type="project" value="InterPro"/>
</dbReference>
<dbReference type="Gene3D" id="3.40.50.620">
    <property type="entry name" value="HUPs"/>
    <property type="match status" value="2"/>
</dbReference>
<dbReference type="Gene3D" id="1.10.730.10">
    <property type="entry name" value="Isoleucyl-tRNA Synthetase, Domain 1"/>
    <property type="match status" value="1"/>
</dbReference>
<dbReference type="InterPro" id="IPR002300">
    <property type="entry name" value="aa-tRNA-synth_Ia"/>
</dbReference>
<dbReference type="InterPro" id="IPR002301">
    <property type="entry name" value="Ile-tRNA-ligase"/>
</dbReference>
<dbReference type="InterPro" id="IPR023586">
    <property type="entry name" value="Ile-tRNA-ligase_type2"/>
</dbReference>
<dbReference type="InterPro" id="IPR014729">
    <property type="entry name" value="Rossmann-like_a/b/a_fold"/>
</dbReference>
<dbReference type="InterPro" id="IPR009080">
    <property type="entry name" value="tRNAsynth_Ia_anticodon-bd"/>
</dbReference>
<dbReference type="InterPro" id="IPR009008">
    <property type="entry name" value="Val/Leu/Ile-tRNA-synth_edit"/>
</dbReference>
<dbReference type="NCBIfam" id="TIGR00392">
    <property type="entry name" value="ileS"/>
    <property type="match status" value="1"/>
</dbReference>
<dbReference type="PANTHER" id="PTHR42780:SF1">
    <property type="entry name" value="ISOLEUCINE--TRNA LIGASE, CYTOPLASMIC"/>
    <property type="match status" value="1"/>
</dbReference>
<dbReference type="PANTHER" id="PTHR42780">
    <property type="entry name" value="SOLEUCYL-TRNA SYNTHETASE"/>
    <property type="match status" value="1"/>
</dbReference>
<dbReference type="Pfam" id="PF00133">
    <property type="entry name" value="tRNA-synt_1"/>
    <property type="match status" value="1"/>
</dbReference>
<dbReference type="PRINTS" id="PR00984">
    <property type="entry name" value="TRNASYNTHILE"/>
</dbReference>
<dbReference type="SUPFAM" id="SSF47323">
    <property type="entry name" value="Anticodon-binding domain of a subclass of class I aminoacyl-tRNA synthetases"/>
    <property type="match status" value="1"/>
</dbReference>
<dbReference type="SUPFAM" id="SSF52374">
    <property type="entry name" value="Nucleotidylyl transferase"/>
    <property type="match status" value="1"/>
</dbReference>
<dbReference type="SUPFAM" id="SSF50677">
    <property type="entry name" value="ValRS/IleRS/LeuRS editing domain"/>
    <property type="match status" value="1"/>
</dbReference>
<reference key="1">
    <citation type="journal article" date="1995" name="Proc. Natl. Acad. Sci. U.S.A.">
        <title>Root of the universal tree of life based on ancient aminoacyl-tRNA synthetase gene duplications.</title>
        <authorList>
            <person name="Brown J.R."/>
            <person name="Doolittle W.F."/>
        </authorList>
    </citation>
    <scope>NUCLEOTIDE SEQUENCE [GENOMIC DNA]</scope>
</reference>
<organism>
    <name type="scientific">Antonospora locustae</name>
    <name type="common">Microsporidian parasite</name>
    <name type="synonym">Nosema locustae</name>
    <dbReference type="NCBI Taxonomy" id="278021"/>
    <lineage>
        <taxon>Eukaryota</taxon>
        <taxon>Fungi</taxon>
        <taxon>Fungi incertae sedis</taxon>
        <taxon>Microsporidia</taxon>
        <taxon>Antonospora</taxon>
    </lineage>
</organism>